<dbReference type="EMBL" id="AF167163">
    <property type="protein sequence ID" value="AAD51408.1"/>
    <property type="molecule type" value="Genomic_DNA"/>
</dbReference>
<dbReference type="SMR" id="Q9UW22"/>
<dbReference type="CGD" id="CAL0000202036">
    <property type="gene designation" value="MTLALPHA2"/>
</dbReference>
<dbReference type="eggNOG" id="KOG0773">
    <property type="taxonomic scope" value="Eukaryota"/>
</dbReference>
<dbReference type="HOGENOM" id="CLU_2084545_0_0_1"/>
<dbReference type="GO" id="GO:0005634">
    <property type="term" value="C:nucleus"/>
    <property type="evidence" value="ECO:0007669"/>
    <property type="project" value="UniProtKB-SubCell"/>
</dbReference>
<dbReference type="GO" id="GO:0003677">
    <property type="term" value="F:DNA binding"/>
    <property type="evidence" value="ECO:0000314"/>
    <property type="project" value="CGD"/>
</dbReference>
<dbReference type="GO" id="GO:0003700">
    <property type="term" value="F:DNA-binding transcription factor activity"/>
    <property type="evidence" value="ECO:0000315"/>
    <property type="project" value="CGD"/>
</dbReference>
<dbReference type="GO" id="GO:0030154">
    <property type="term" value="P:cell differentiation"/>
    <property type="evidence" value="ECO:0000315"/>
    <property type="project" value="CGD"/>
</dbReference>
<dbReference type="GO" id="GO:0031138">
    <property type="term" value="P:negative regulation of conjugation with cellular fusion"/>
    <property type="evidence" value="ECO:0000315"/>
    <property type="project" value="CGD"/>
</dbReference>
<dbReference type="GO" id="GO:1900240">
    <property type="term" value="P:negative regulation of phenotypic switching"/>
    <property type="evidence" value="ECO:0000315"/>
    <property type="project" value="CGD"/>
</dbReference>
<dbReference type="GO" id="GO:0000122">
    <property type="term" value="P:negative regulation of transcription by RNA polymerase II"/>
    <property type="evidence" value="ECO:0000315"/>
    <property type="project" value="CGD"/>
</dbReference>
<dbReference type="GO" id="GO:0036166">
    <property type="term" value="P:phenotypic switching"/>
    <property type="evidence" value="ECO:0000315"/>
    <property type="project" value="CGD"/>
</dbReference>
<dbReference type="CDD" id="cd00086">
    <property type="entry name" value="homeodomain"/>
    <property type="match status" value="1"/>
</dbReference>
<dbReference type="Gene3D" id="1.10.10.60">
    <property type="entry name" value="Homeodomain-like"/>
    <property type="match status" value="1"/>
</dbReference>
<dbReference type="InterPro" id="IPR001356">
    <property type="entry name" value="HD"/>
</dbReference>
<dbReference type="InterPro" id="IPR009057">
    <property type="entry name" value="Homeodomain-like_sf"/>
</dbReference>
<dbReference type="InterPro" id="IPR008422">
    <property type="entry name" value="KN_HD"/>
</dbReference>
<dbReference type="Pfam" id="PF05920">
    <property type="entry name" value="Homeobox_KN"/>
    <property type="match status" value="1"/>
</dbReference>
<dbReference type="SMART" id="SM00389">
    <property type="entry name" value="HOX"/>
    <property type="match status" value="1"/>
</dbReference>
<dbReference type="SUPFAM" id="SSF46689">
    <property type="entry name" value="Homeodomain-like"/>
    <property type="match status" value="1"/>
</dbReference>
<dbReference type="PROSITE" id="PS50071">
    <property type="entry name" value="HOMEOBOX_2"/>
    <property type="match status" value="1"/>
</dbReference>
<name>MTAL2_CANAL</name>
<proteinExistence type="evidence at transcript level"/>
<protein>
    <recommendedName>
        <fullName>Mating-type-like protein ALPHA2</fullName>
        <shortName>MTLalpha2 protein</shortName>
    </recommendedName>
</protein>
<keyword id="KW-0238">DNA-binding</keyword>
<keyword id="KW-0371">Homeobox</keyword>
<keyword id="KW-0539">Nucleus</keyword>
<keyword id="KW-0678">Repressor</keyword>
<keyword id="KW-0804">Transcription</keyword>
<keyword id="KW-0805">Transcription regulation</keyword>
<evidence type="ECO:0000250" key="1"/>
<evidence type="ECO:0000255" key="2">
    <source>
        <dbReference type="PROSITE-ProRule" id="PRU00108"/>
    </source>
</evidence>
<evidence type="ECO:0000269" key="3">
    <source>
    </source>
</evidence>
<evidence type="ECO:0000269" key="4">
    <source>
    </source>
</evidence>
<evidence type="ECO:0000269" key="5">
    <source>
    </source>
</evidence>
<evidence type="ECO:0000305" key="6"/>
<evidence type="ECO:0000312" key="7">
    <source>
        <dbReference type="CGD" id="CAL0000202036"/>
    </source>
</evidence>
<accession>Q9UW22</accession>
<accession>Q59YX0</accession>
<gene>
    <name type="primary">MTLALPHA2</name>
    <name evidence="7" type="ordered locus">C5_01785W_B</name>
    <name type="ORF">CaO19.10708</name>
</gene>
<feature type="chain" id="PRO_0000049173" description="Mating-type-like protein ALPHA2">
    <location>
        <begin position="1"/>
        <end position="186"/>
    </location>
</feature>
<feature type="DNA-binding region" description="Homeobox; TALE-type" evidence="2">
    <location>
        <begin position="112"/>
        <end position="174"/>
    </location>
</feature>
<organism>
    <name type="scientific">Candida albicans (strain SC5314 / ATCC MYA-2876)</name>
    <name type="common">Yeast</name>
    <dbReference type="NCBI Taxonomy" id="237561"/>
    <lineage>
        <taxon>Eukaryota</taxon>
        <taxon>Fungi</taxon>
        <taxon>Dikarya</taxon>
        <taxon>Ascomycota</taxon>
        <taxon>Saccharomycotina</taxon>
        <taxon>Pichiomycetes</taxon>
        <taxon>Debaryomycetaceae</taxon>
        <taxon>Candida/Lodderomyces clade</taxon>
        <taxon>Candida</taxon>
    </lineage>
</organism>
<reference key="1">
    <citation type="journal article" date="1999" name="Science">
        <title>Identification of a mating type-like locus in the asexual pathogenic yeast Candida albicans.</title>
        <authorList>
            <person name="Hull C.M."/>
            <person name="Johnson A.D."/>
        </authorList>
    </citation>
    <scope>NUCLEOTIDE SEQUENCE [GENOMIC DNA]</scope>
    <source>
        <strain>SC5314 / ATCC MYA-2876</strain>
    </source>
</reference>
<reference key="2">
    <citation type="journal article" date="2002" name="Cell">
        <title>White-opaque switching in Candida albicans is controlled by mating-type locus homeodomain proteins and allows efficient mating.</title>
        <authorList>
            <person name="Miller M.G."/>
            <person name="Johnson A.D."/>
        </authorList>
    </citation>
    <scope>FUNCTION</scope>
</reference>
<reference key="3">
    <citation type="journal article" date="2003" name="Cell">
        <title>Evolution of a combinatorial transcriptional circuit: a case study in yeasts.</title>
        <authorList>
            <person name="Tsong A.E."/>
            <person name="Miller M.G."/>
            <person name="Raisner R.M."/>
            <person name="Johnson A.D."/>
        </authorList>
    </citation>
    <scope>FUNCTION</scope>
</reference>
<reference key="4">
    <citation type="journal article" date="2004" name="Eukaryot. Cell">
        <title>Hemoglobin regulates expression of an activator of mating-type locus alpha genes in Candida albicans.</title>
        <authorList>
            <person name="Pendrak M.L."/>
            <person name="Yan S.S."/>
            <person name="Roberts D.D."/>
        </authorList>
    </citation>
    <scope>INDUCTION</scope>
</reference>
<comment type="function">
    <text evidence="3 4">Mating type proteins are sequence specific DNA-binding proteins that act as master switches in yeast differentiation by controlling gene expression in a cell type-specific fashion. Transcriptional corepressor that acts in conjunction with A1 to repress transcription both of homozygote-specific genes and of genes necessary for the white-opaque switch, a prerequisite for mating.</text>
</comment>
<comment type="subunit">
    <text evidence="1">Forms a heterodimer with A1.</text>
</comment>
<comment type="subcellular location">
    <subcellularLocation>
        <location evidence="2">Nucleus</location>
    </subcellularLocation>
</comment>
<comment type="induction">
    <text evidence="5">Induced by HBR1 in response to hemoglobin and growth signals.</text>
</comment>
<comment type="miscellaneous">
    <text evidence="6">The C.albicans mating-type-like (MTL) locus contains, in addition to the genes for the regulatory proteins (MTLA1, MTLA2, MTLALPHA1 and MTLALPHA2), a and alpha idiomorphs of a phosphatidylinositol kinase (PIKA and PIKALPHA), a poly(A) polymerase (PAPA and PAPALPHA) and an oxysterol binding protein-like protein (OBPA and OBPALPHA). MTLALPHA2 is not represented in the genomic sequence of strain SC5314 because that haploid assembly includes the mating type a allele of this locus.</text>
</comment>
<comment type="miscellaneous">
    <text>Most C.albicans strains are heterozygous at the MTL locus and do not readily undergo white-opaque switching and mating, but mating occurs in hemi- or homozygous strains. Mating takes place in opaque cells, produces tetraploid progeny and seems to occur rarely, if at all, in nature. Conservation of mating capacity is rather thought to be due to the simultaneously regulated white-opaque switch, which seems to play an important role in host commensalism.</text>
</comment>
<comment type="similarity">
    <text evidence="6">Belongs to the TALE/M-ATYP homeobox family.</text>
</comment>
<sequence length="186" mass="21750">MNSHSEALFEINQRLSSHIRTMSNFPVFDPQKITNDVEANIKRMTSILKSKRLTREDEDLMKMINDCSKVLHEMLLERIMLQQDSIQFFTEKEASDSPFSNSADTIDEDDDKKIKSRRLTKKQLLVLEGWFQKHKNHPYSQKDQTNLLIKSTKLSKSQVQNWISNRRRKEKNTKVSPELAALLLTG</sequence>